<comment type="function">
    <text evidence="1">Site-specific tyrosine recombinase, which acts by catalyzing the cutting and rejoining of the recombining DNA molecules. The XerC-XerD complex is essential to convert dimers of the bacterial chromosome into monomers to permit their segregation at cell division. It also contributes to the segregational stability of plasmids.</text>
</comment>
<comment type="subunit">
    <text evidence="1">Forms a cyclic heterotetrameric complex composed of two molecules of XerC and two molecules of XerD.</text>
</comment>
<comment type="subcellular location">
    <subcellularLocation>
        <location evidence="1">Cytoplasm</location>
    </subcellularLocation>
</comment>
<comment type="similarity">
    <text evidence="1">Belongs to the 'phage' integrase family. XerD subfamily.</text>
</comment>
<reference key="1">
    <citation type="journal article" date="2005" name="J. Bacteriol.">
        <title>Whole-genome sequencing of Staphylococcus haemolyticus uncovers the extreme plasticity of its genome and the evolution of human-colonizing staphylococcal species.</title>
        <authorList>
            <person name="Takeuchi F."/>
            <person name="Watanabe S."/>
            <person name="Baba T."/>
            <person name="Yuzawa H."/>
            <person name="Ito T."/>
            <person name="Morimoto Y."/>
            <person name="Kuroda M."/>
            <person name="Cui L."/>
            <person name="Takahashi M."/>
            <person name="Ankai A."/>
            <person name="Baba S."/>
            <person name="Fukui S."/>
            <person name="Lee J.C."/>
            <person name="Hiramatsu K."/>
        </authorList>
    </citation>
    <scope>NUCLEOTIDE SEQUENCE [LARGE SCALE GENOMIC DNA]</scope>
    <source>
        <strain>JCSC1435</strain>
    </source>
</reference>
<dbReference type="EMBL" id="AP006716">
    <property type="protein sequence ID" value="BAE04728.1"/>
    <property type="molecule type" value="Genomic_DNA"/>
</dbReference>
<dbReference type="RefSeq" id="WP_011275715.1">
    <property type="nucleotide sequence ID" value="NC_007168.1"/>
</dbReference>
<dbReference type="SMR" id="Q4L6J7"/>
<dbReference type="KEGG" id="sha:SH1419"/>
<dbReference type="eggNOG" id="COG4974">
    <property type="taxonomic scope" value="Bacteria"/>
</dbReference>
<dbReference type="HOGENOM" id="CLU_027562_9_6_9"/>
<dbReference type="OrthoDB" id="9801717at2"/>
<dbReference type="Proteomes" id="UP000000543">
    <property type="component" value="Chromosome"/>
</dbReference>
<dbReference type="GO" id="GO:0005737">
    <property type="term" value="C:cytoplasm"/>
    <property type="evidence" value="ECO:0007669"/>
    <property type="project" value="UniProtKB-SubCell"/>
</dbReference>
<dbReference type="GO" id="GO:0003677">
    <property type="term" value="F:DNA binding"/>
    <property type="evidence" value="ECO:0007669"/>
    <property type="project" value="UniProtKB-KW"/>
</dbReference>
<dbReference type="GO" id="GO:0009037">
    <property type="term" value="F:tyrosine-based site-specific recombinase activity"/>
    <property type="evidence" value="ECO:0007669"/>
    <property type="project" value="UniProtKB-UniRule"/>
</dbReference>
<dbReference type="GO" id="GO:0051301">
    <property type="term" value="P:cell division"/>
    <property type="evidence" value="ECO:0007669"/>
    <property type="project" value="UniProtKB-KW"/>
</dbReference>
<dbReference type="GO" id="GO:0007059">
    <property type="term" value="P:chromosome segregation"/>
    <property type="evidence" value="ECO:0007669"/>
    <property type="project" value="UniProtKB-UniRule"/>
</dbReference>
<dbReference type="GO" id="GO:0006313">
    <property type="term" value="P:DNA transposition"/>
    <property type="evidence" value="ECO:0007669"/>
    <property type="project" value="UniProtKB-UniRule"/>
</dbReference>
<dbReference type="CDD" id="cd00798">
    <property type="entry name" value="INT_XerDC_C"/>
    <property type="match status" value="1"/>
</dbReference>
<dbReference type="Gene3D" id="1.10.150.130">
    <property type="match status" value="1"/>
</dbReference>
<dbReference type="Gene3D" id="1.10.443.10">
    <property type="entry name" value="Intergrase catalytic core"/>
    <property type="match status" value="1"/>
</dbReference>
<dbReference type="HAMAP" id="MF_01808">
    <property type="entry name" value="Recomb_XerC_XerD"/>
    <property type="match status" value="1"/>
</dbReference>
<dbReference type="HAMAP" id="MF_01807">
    <property type="entry name" value="Recomb_XerD"/>
    <property type="match status" value="1"/>
</dbReference>
<dbReference type="InterPro" id="IPR044068">
    <property type="entry name" value="CB"/>
</dbReference>
<dbReference type="InterPro" id="IPR011010">
    <property type="entry name" value="DNA_brk_join_enz"/>
</dbReference>
<dbReference type="InterPro" id="IPR013762">
    <property type="entry name" value="Integrase-like_cat_sf"/>
</dbReference>
<dbReference type="InterPro" id="IPR002104">
    <property type="entry name" value="Integrase_catalytic"/>
</dbReference>
<dbReference type="InterPro" id="IPR010998">
    <property type="entry name" value="Integrase_recombinase_N"/>
</dbReference>
<dbReference type="InterPro" id="IPR004107">
    <property type="entry name" value="Integrase_SAM-like_N"/>
</dbReference>
<dbReference type="InterPro" id="IPR011932">
    <property type="entry name" value="Recomb_XerD"/>
</dbReference>
<dbReference type="InterPro" id="IPR023009">
    <property type="entry name" value="Tyrosine_recombinase_XerC/XerD"/>
</dbReference>
<dbReference type="InterPro" id="IPR050090">
    <property type="entry name" value="Tyrosine_recombinase_XerCD"/>
</dbReference>
<dbReference type="NCBIfam" id="NF001399">
    <property type="entry name" value="PRK00283.1"/>
    <property type="match status" value="1"/>
</dbReference>
<dbReference type="NCBIfam" id="NF040815">
    <property type="entry name" value="recomb_XerA_Arch"/>
    <property type="match status" value="1"/>
</dbReference>
<dbReference type="NCBIfam" id="TIGR02225">
    <property type="entry name" value="recomb_XerD"/>
    <property type="match status" value="1"/>
</dbReference>
<dbReference type="PANTHER" id="PTHR30349">
    <property type="entry name" value="PHAGE INTEGRASE-RELATED"/>
    <property type="match status" value="1"/>
</dbReference>
<dbReference type="PANTHER" id="PTHR30349:SF81">
    <property type="entry name" value="TYROSINE RECOMBINASE XERC"/>
    <property type="match status" value="1"/>
</dbReference>
<dbReference type="Pfam" id="PF02899">
    <property type="entry name" value="Phage_int_SAM_1"/>
    <property type="match status" value="1"/>
</dbReference>
<dbReference type="Pfam" id="PF00589">
    <property type="entry name" value="Phage_integrase"/>
    <property type="match status" value="1"/>
</dbReference>
<dbReference type="SUPFAM" id="SSF56349">
    <property type="entry name" value="DNA breaking-rejoining enzymes"/>
    <property type="match status" value="1"/>
</dbReference>
<dbReference type="PROSITE" id="PS51900">
    <property type="entry name" value="CB"/>
    <property type="match status" value="1"/>
</dbReference>
<dbReference type="PROSITE" id="PS51898">
    <property type="entry name" value="TYR_RECOMBINASE"/>
    <property type="match status" value="1"/>
</dbReference>
<accession>Q4L6J7</accession>
<sequence>METIIEEYLKFIQIEKGLSENTIGAYRRDLKKYQLYMQEQKIAHIDFIDRQTIQECLGSLIDQGASAKSIARFISTIRSFHQFALREKYAAKDPTVLIETPKYEKKLPDVLDVEEVIQLLETPDLTKNNGYRDRTILELLYATGMRVTELIQIEIDDVNLIMGFVKVFGKGNKERIIPLGDTVIEYLDTYINNVRSQLLKKTVTNVLFLNLHGRPLTRQGIWKLIKQYGLRANINKTLTPHTLRHSFATHLLENGADLRAVQEMLGHSDISTTQLYTHVSKTQIRQMYNQFHPRA</sequence>
<protein>
    <recommendedName>
        <fullName evidence="1">Tyrosine recombinase XerD</fullName>
    </recommendedName>
</protein>
<organism>
    <name type="scientific">Staphylococcus haemolyticus (strain JCSC1435)</name>
    <dbReference type="NCBI Taxonomy" id="279808"/>
    <lineage>
        <taxon>Bacteria</taxon>
        <taxon>Bacillati</taxon>
        <taxon>Bacillota</taxon>
        <taxon>Bacilli</taxon>
        <taxon>Bacillales</taxon>
        <taxon>Staphylococcaceae</taxon>
        <taxon>Staphylococcus</taxon>
    </lineage>
</organism>
<name>XERD_STAHJ</name>
<evidence type="ECO:0000255" key="1">
    <source>
        <dbReference type="HAMAP-Rule" id="MF_01807"/>
    </source>
</evidence>
<evidence type="ECO:0000255" key="2">
    <source>
        <dbReference type="PROSITE-ProRule" id="PRU01246"/>
    </source>
</evidence>
<evidence type="ECO:0000255" key="3">
    <source>
        <dbReference type="PROSITE-ProRule" id="PRU01248"/>
    </source>
</evidence>
<proteinExistence type="inferred from homology"/>
<feature type="chain" id="PRO_0000095425" description="Tyrosine recombinase XerD">
    <location>
        <begin position="1"/>
        <end position="295"/>
    </location>
</feature>
<feature type="domain" description="Core-binding (CB)" evidence="3">
    <location>
        <begin position="1"/>
        <end position="85"/>
    </location>
</feature>
<feature type="domain" description="Tyr recombinase" evidence="2">
    <location>
        <begin position="106"/>
        <end position="289"/>
    </location>
</feature>
<feature type="active site" evidence="1">
    <location>
        <position position="146"/>
    </location>
</feature>
<feature type="active site" evidence="1">
    <location>
        <position position="170"/>
    </location>
</feature>
<feature type="active site" evidence="1">
    <location>
        <position position="241"/>
    </location>
</feature>
<feature type="active site" evidence="1">
    <location>
        <position position="244"/>
    </location>
</feature>
<feature type="active site" evidence="1">
    <location>
        <position position="267"/>
    </location>
</feature>
<feature type="active site" description="O-(3'-phospho-DNA)-tyrosine intermediate" evidence="1">
    <location>
        <position position="276"/>
    </location>
</feature>
<gene>
    <name evidence="1" type="primary">xerD</name>
    <name type="ordered locus">SH1419</name>
</gene>
<keyword id="KW-0131">Cell cycle</keyword>
<keyword id="KW-0132">Cell division</keyword>
<keyword id="KW-0159">Chromosome partition</keyword>
<keyword id="KW-0963">Cytoplasm</keyword>
<keyword id="KW-0229">DNA integration</keyword>
<keyword id="KW-0233">DNA recombination</keyword>
<keyword id="KW-0238">DNA-binding</keyword>